<organism>
    <name type="scientific">Escherichia coli O6:H1 (strain CFT073 / ATCC 700928 / UPEC)</name>
    <dbReference type="NCBI Taxonomy" id="199310"/>
    <lineage>
        <taxon>Bacteria</taxon>
        <taxon>Pseudomonadati</taxon>
        <taxon>Pseudomonadota</taxon>
        <taxon>Gammaproteobacteria</taxon>
        <taxon>Enterobacterales</taxon>
        <taxon>Enterobacteriaceae</taxon>
        <taxon>Escherichia</taxon>
    </lineage>
</organism>
<accession>Q8FKL1</accession>
<keyword id="KW-1185">Reference proteome</keyword>
<keyword id="KW-0687">Ribonucleoprotein</keyword>
<keyword id="KW-0689">Ribosomal protein</keyword>
<feature type="chain" id="PRO_0000126185" description="Large ribosomal subunit protein bL36B">
    <location>
        <begin position="1"/>
        <end position="46"/>
    </location>
</feature>
<gene>
    <name evidence="1" type="primary">rpmJ2</name>
    <name type="ordered locus">c0406</name>
</gene>
<dbReference type="EMBL" id="AE014075">
    <property type="protein sequence ID" value="AAN78887.1"/>
    <property type="status" value="ALT_INIT"/>
    <property type="molecule type" value="Genomic_DNA"/>
</dbReference>
<dbReference type="SMR" id="Q8FKL1"/>
<dbReference type="STRING" id="199310.c0406"/>
<dbReference type="KEGG" id="ecc:c0406"/>
<dbReference type="eggNOG" id="COG0257">
    <property type="taxonomic scope" value="Bacteria"/>
</dbReference>
<dbReference type="HOGENOM" id="CLU_135723_3_1_6"/>
<dbReference type="Proteomes" id="UP000001410">
    <property type="component" value="Chromosome"/>
</dbReference>
<dbReference type="GO" id="GO:1990904">
    <property type="term" value="C:ribonucleoprotein complex"/>
    <property type="evidence" value="ECO:0007669"/>
    <property type="project" value="UniProtKB-KW"/>
</dbReference>
<dbReference type="GO" id="GO:0005840">
    <property type="term" value="C:ribosome"/>
    <property type="evidence" value="ECO:0007669"/>
    <property type="project" value="UniProtKB-KW"/>
</dbReference>
<dbReference type="GO" id="GO:0003735">
    <property type="term" value="F:structural constituent of ribosome"/>
    <property type="evidence" value="ECO:0007669"/>
    <property type="project" value="InterPro"/>
</dbReference>
<dbReference type="GO" id="GO:0006412">
    <property type="term" value="P:translation"/>
    <property type="evidence" value="ECO:0007669"/>
    <property type="project" value="UniProtKB-UniRule"/>
</dbReference>
<dbReference type="HAMAP" id="MF_00251">
    <property type="entry name" value="Ribosomal_bL36"/>
    <property type="match status" value="1"/>
</dbReference>
<dbReference type="InterPro" id="IPR000473">
    <property type="entry name" value="Ribosomal_bL36"/>
</dbReference>
<dbReference type="InterPro" id="IPR035977">
    <property type="entry name" value="Ribosomal_bL36_sp"/>
</dbReference>
<dbReference type="InterPro" id="IPR047621">
    <property type="entry name" value="Ribosomal_L36_bact"/>
</dbReference>
<dbReference type="NCBIfam" id="NF002021">
    <property type="entry name" value="PRK00831.1"/>
    <property type="match status" value="1"/>
</dbReference>
<dbReference type="NCBIfam" id="TIGR01022">
    <property type="entry name" value="rpmJ_bact"/>
    <property type="match status" value="1"/>
</dbReference>
<dbReference type="PANTHER" id="PTHR47781">
    <property type="entry name" value="50S RIBOSOMAL PROTEIN L36 2"/>
    <property type="match status" value="1"/>
</dbReference>
<dbReference type="PANTHER" id="PTHR47781:SF1">
    <property type="entry name" value="LARGE RIBOSOMAL SUBUNIT PROTEIN BL36B"/>
    <property type="match status" value="1"/>
</dbReference>
<dbReference type="Pfam" id="PF00444">
    <property type="entry name" value="Ribosomal_L36"/>
    <property type="match status" value="1"/>
</dbReference>
<dbReference type="SUPFAM" id="SSF57840">
    <property type="entry name" value="Ribosomal protein L36"/>
    <property type="match status" value="1"/>
</dbReference>
<dbReference type="PROSITE" id="PS00828">
    <property type="entry name" value="RIBOSOMAL_L36"/>
    <property type="match status" value="1"/>
</dbReference>
<sequence>MKVLNSLRTAKERHPDCQIVKRKGRLYVICKSNPRFKAVQGRKKKR</sequence>
<protein>
    <recommendedName>
        <fullName evidence="1">Large ribosomal subunit protein bL36B</fullName>
    </recommendedName>
    <alternativeName>
        <fullName evidence="2">50S ribosomal protein L36 2</fullName>
    </alternativeName>
</protein>
<reference key="1">
    <citation type="journal article" date="2002" name="Proc. Natl. Acad. Sci. U.S.A.">
        <title>Extensive mosaic structure revealed by the complete genome sequence of uropathogenic Escherichia coli.</title>
        <authorList>
            <person name="Welch R.A."/>
            <person name="Burland V."/>
            <person name="Plunkett G. III"/>
            <person name="Redford P."/>
            <person name="Roesch P."/>
            <person name="Rasko D."/>
            <person name="Buckles E.L."/>
            <person name="Liou S.-R."/>
            <person name="Boutin A."/>
            <person name="Hackett J."/>
            <person name="Stroud D."/>
            <person name="Mayhew G.F."/>
            <person name="Rose D.J."/>
            <person name="Zhou S."/>
            <person name="Schwartz D.C."/>
            <person name="Perna N.T."/>
            <person name="Mobley H.L.T."/>
            <person name="Donnenberg M.S."/>
            <person name="Blattner F.R."/>
        </authorList>
    </citation>
    <scope>NUCLEOTIDE SEQUENCE [LARGE SCALE GENOMIC DNA]</scope>
    <source>
        <strain>CFT073 / ATCC 700928 / UPEC</strain>
    </source>
</reference>
<name>RL362_ECOL6</name>
<proteinExistence type="inferred from homology"/>
<evidence type="ECO:0000255" key="1">
    <source>
        <dbReference type="HAMAP-Rule" id="MF_00251"/>
    </source>
</evidence>
<evidence type="ECO:0000305" key="2"/>
<comment type="similarity">
    <text evidence="1">Belongs to the bacterial ribosomal protein bL36 family.</text>
</comment>
<comment type="sequence caution" evidence="2">
    <conflict type="erroneous initiation">
        <sequence resource="EMBL-CDS" id="AAN78887"/>
    </conflict>
    <text>Extended N-terminus.</text>
</comment>